<protein>
    <recommendedName>
        <fullName>Chorion-specific transcription factor GCMb</fullName>
        <shortName>hGCMb</shortName>
    </recommendedName>
    <alternativeName>
        <fullName>GCM motif protein 2</fullName>
    </alternativeName>
    <alternativeName>
        <fullName evidence="13 14 15">Glial cells missing homolog 2</fullName>
    </alternativeName>
</protein>
<feature type="chain" id="PRO_0000126650" description="Chorion-specific transcription factor GCMb">
    <location>
        <begin position="1"/>
        <end position="506"/>
    </location>
</feature>
<feature type="DNA-binding region" description="GCM" evidence="1">
    <location>
        <begin position="19"/>
        <end position="174"/>
    </location>
</feature>
<feature type="region of interest" description="Disordered" evidence="2">
    <location>
        <begin position="155"/>
        <end position="213"/>
    </location>
</feature>
<feature type="region of interest" description="C-terminal conserved inhibitory domain (CCID)" evidence="9">
    <location>
        <begin position="379"/>
        <end position="395"/>
    </location>
</feature>
<feature type="compositionally biased region" description="Basic and acidic residues" evidence="2">
    <location>
        <begin position="155"/>
        <end position="172"/>
    </location>
</feature>
<feature type="binding site" evidence="1">
    <location>
        <position position="81"/>
    </location>
    <ligand>
        <name>Zn(2+)</name>
        <dbReference type="ChEBI" id="CHEBI:29105"/>
        <label>1</label>
    </ligand>
</feature>
<feature type="binding site" evidence="1">
    <location>
        <position position="87"/>
    </location>
    <ligand>
        <name>Zn(2+)</name>
        <dbReference type="ChEBI" id="CHEBI:29105"/>
        <label>2</label>
    </ligand>
</feature>
<feature type="binding site" evidence="1">
    <location>
        <position position="91"/>
    </location>
    <ligand>
        <name>Zn(2+)</name>
        <dbReference type="ChEBI" id="CHEBI:29105"/>
        <label>2</label>
    </ligand>
</feature>
<feature type="binding site" evidence="1">
    <location>
        <position position="118"/>
    </location>
    <ligand>
        <name>Zn(2+)</name>
        <dbReference type="ChEBI" id="CHEBI:29105"/>
        <label>2</label>
    </ligand>
</feature>
<feature type="binding site" evidence="1">
    <location>
        <position position="121"/>
    </location>
    <ligand>
        <name>Zn(2+)</name>
        <dbReference type="ChEBI" id="CHEBI:29105"/>
        <label>2</label>
    </ligand>
</feature>
<feature type="binding site" evidence="1">
    <location>
        <position position="130"/>
    </location>
    <ligand>
        <name>Zn(2+)</name>
        <dbReference type="ChEBI" id="CHEBI:29105"/>
        <label>1</label>
    </ligand>
</feature>
<feature type="binding site" evidence="1">
    <location>
        <position position="157"/>
    </location>
    <ligand>
        <name>Zn(2+)</name>
        <dbReference type="ChEBI" id="CHEBI:29105"/>
        <label>1</label>
    </ligand>
</feature>
<feature type="binding site" evidence="1">
    <location>
        <position position="159"/>
    </location>
    <ligand>
        <name>Zn(2+)</name>
        <dbReference type="ChEBI" id="CHEBI:29105"/>
        <label>1</label>
    </ligand>
</feature>
<feature type="sequence variant" id="VAR_058044" description="In FIH2; abolishes normal DNA binding ability of the protein; dbSNP:rs104893959." evidence="4 5">
    <original>R</original>
    <variation>L</variation>
    <location>
        <position position="47"/>
    </location>
</feature>
<feature type="sequence variant" id="VAR_049130" description="In dbSNP:rs11963186.">
    <original>D</original>
    <variation>N</variation>
    <location>
        <position position="53"/>
    </location>
</feature>
<feature type="sequence variant" id="VAR_058045" description="In FIH2; the mutation causes loss-of-function; abolishes transactivation capacity despite normal subcellular localization, protein stability and DNA-binding specificity; dbSNP:rs104893960." evidence="3">
    <original>G</original>
    <variation>S</variation>
    <location>
        <position position="63"/>
    </location>
</feature>
<feature type="sequence variant" id="VAR_065495" description="In FIH2; abolishes DNA binding ability; dbSNP:rs780594439." evidence="5 11">
    <original>R</original>
    <variation>W</variation>
    <location>
        <position position="110"/>
    </location>
</feature>
<feature type="sequence variant" id="VAR_049131" description="In dbSNP:rs35786951.">
    <original>A</original>
    <variation>V</variation>
    <location>
        <position position="117"/>
    </location>
</feature>
<feature type="sequence variant" id="VAR_076838" description="In FIH2; transcription of mRNA, but loss of protein expression." evidence="8">
    <location>
        <begin position="136"/>
        <end position="506"/>
    </location>
</feature>
<feature type="sequence variant" id="VAR_049132" description="Shows normal transcriptional activity; dbSNP:rs7744163." evidence="9">
    <original>G</original>
    <variation>S</variation>
    <location>
        <position position="203"/>
    </location>
</feature>
<feature type="sequence variant" id="VAR_049133" description="Shows normal transcriptional activity; dbSNP:rs35395043." evidence="9">
    <original>I</original>
    <variation>V</variation>
    <location>
        <position position="227"/>
    </location>
</feature>
<feature type="sequence variant" id="VAR_078579" description="In HRPT4; found on the same allele as Q-379; gain-of-function mutation; increases transcriptional activity; dbSNP:rs1057519581." evidence="9">
    <original>Q</original>
    <variation>E</variation>
    <location>
        <position position="251"/>
    </location>
</feature>
<feature type="sequence variant" id="VAR_065496" description="Shows normal transcriptional activity; dbSNP:rs61734277." evidence="5 7 9">
    <original>Y</original>
    <variation>D</variation>
    <location>
        <position position="282"/>
    </location>
</feature>
<feature type="sequence variant" id="VAR_078580" description="Shows normal transcriptional activity; dbSNP:rs114070356." evidence="9">
    <original>N</original>
    <variation>D</variation>
    <location>
        <position position="315"/>
    </location>
</feature>
<feature type="sequence variant" id="VAR_078581" description="In HRPT4; found on the same allele as E-251; gain-of-function mutation; increases transcriptional activity; dbSNP:rs1057519582." evidence="9">
    <original>L</original>
    <variation>Q</variation>
    <location>
        <position position="379"/>
    </location>
</feature>
<feature type="sequence variant" id="VAR_065497" description="In HRPT4; uncertain significance; dbSNP:rs371918069." evidence="7 9">
    <original>V</original>
    <variation>M</variation>
    <location>
        <position position="382"/>
    </location>
</feature>
<feature type="sequence variant" id="VAR_078582" description="In HRPT4; gain-of-function mutation; increases transcriptional activity; dbSNP:rs142287570." evidence="9">
    <original>Y</original>
    <variation>S</variation>
    <location>
        <position position="394"/>
    </location>
</feature>
<feature type="sequence variant" id="VAR_065498" description="In FIH2; exerts a dominant-negative effect to abolish transactivation capacity; dbSNP:rs533942394." evidence="6">
    <original>N</original>
    <variation>H</variation>
    <location>
        <position position="502"/>
    </location>
</feature>
<accession>O75603</accession>
<accession>D3GDV6</accession>
<accession>Q5THN5</accession>
<gene>
    <name evidence="16" type="primary">GCM2</name>
    <name evidence="12" type="synonym">GCMB</name>
</gene>
<dbReference type="EMBL" id="AF079550">
    <property type="protein sequence ID" value="AAC33792.1"/>
    <property type="molecule type" value="mRNA"/>
</dbReference>
<dbReference type="EMBL" id="AF091149">
    <property type="protein sequence ID" value="AAC98097.1"/>
    <property type="molecule type" value="mRNA"/>
</dbReference>
<dbReference type="EMBL" id="FJ655849">
    <property type="protein sequence ID" value="ACV69998.1"/>
    <property type="molecule type" value="Genomic_DNA"/>
</dbReference>
<dbReference type="EMBL" id="AL024498">
    <property type="status" value="NOT_ANNOTATED_CDS"/>
    <property type="molecule type" value="Genomic_DNA"/>
</dbReference>
<dbReference type="EMBL" id="AL357497">
    <property type="status" value="NOT_ANNOTATED_CDS"/>
    <property type="molecule type" value="Genomic_DNA"/>
</dbReference>
<dbReference type="EMBL" id="CH471087">
    <property type="protein sequence ID" value="EAW55287.1"/>
    <property type="molecule type" value="Genomic_DNA"/>
</dbReference>
<dbReference type="EMBL" id="BC069603">
    <property type="protein sequence ID" value="AAH69603.1"/>
    <property type="molecule type" value="mRNA"/>
</dbReference>
<dbReference type="EMBL" id="BC117316">
    <property type="protein sequence ID" value="AAI17317.1"/>
    <property type="molecule type" value="mRNA"/>
</dbReference>
<dbReference type="EMBL" id="BC117318">
    <property type="protein sequence ID" value="AAI17319.1"/>
    <property type="molecule type" value="mRNA"/>
</dbReference>
<dbReference type="CCDS" id="CCDS4517.1"/>
<dbReference type="RefSeq" id="NP_004743.1">
    <property type="nucleotide sequence ID" value="NM_004752.4"/>
</dbReference>
<dbReference type="SMR" id="O75603"/>
<dbReference type="BioGRID" id="114673">
    <property type="interactions" value="46"/>
</dbReference>
<dbReference type="FunCoup" id="O75603">
    <property type="interactions" value="459"/>
</dbReference>
<dbReference type="IntAct" id="O75603">
    <property type="interactions" value="31"/>
</dbReference>
<dbReference type="STRING" id="9606.ENSP00000368805"/>
<dbReference type="GlyGen" id="O75603">
    <property type="glycosylation" value="1 site"/>
</dbReference>
<dbReference type="iPTMnet" id="O75603"/>
<dbReference type="PhosphoSitePlus" id="O75603"/>
<dbReference type="BioMuta" id="GCM2"/>
<dbReference type="MassIVE" id="O75603"/>
<dbReference type="PaxDb" id="9606-ENSP00000368805"/>
<dbReference type="Antibodypedia" id="24867">
    <property type="antibodies" value="137 antibodies from 28 providers"/>
</dbReference>
<dbReference type="DNASU" id="9247"/>
<dbReference type="Ensembl" id="ENST00000379491.5">
    <property type="protein sequence ID" value="ENSP00000368805.4"/>
    <property type="gene ID" value="ENSG00000124827.7"/>
</dbReference>
<dbReference type="GeneID" id="9247"/>
<dbReference type="KEGG" id="hsa:9247"/>
<dbReference type="MANE-Select" id="ENST00000379491.5">
    <property type="protein sequence ID" value="ENSP00000368805.4"/>
    <property type="RefSeq nucleotide sequence ID" value="NM_004752.4"/>
    <property type="RefSeq protein sequence ID" value="NP_004743.1"/>
</dbReference>
<dbReference type="UCSC" id="uc003mzn.5">
    <property type="organism name" value="human"/>
</dbReference>
<dbReference type="AGR" id="HGNC:4198"/>
<dbReference type="CTD" id="9247"/>
<dbReference type="DisGeNET" id="9247"/>
<dbReference type="GeneCards" id="GCM2"/>
<dbReference type="HGNC" id="HGNC:4198">
    <property type="gene designation" value="GCM2"/>
</dbReference>
<dbReference type="HPA" id="ENSG00000124827">
    <property type="expression patterns" value="Tissue enriched (parathyroid)"/>
</dbReference>
<dbReference type="MalaCards" id="GCM2"/>
<dbReference type="MIM" id="603716">
    <property type="type" value="gene"/>
</dbReference>
<dbReference type="MIM" id="617343">
    <property type="type" value="phenotype"/>
</dbReference>
<dbReference type="MIM" id="618883">
    <property type="type" value="phenotype"/>
</dbReference>
<dbReference type="neXtProt" id="NX_O75603"/>
<dbReference type="OpenTargets" id="ENSG00000124827"/>
<dbReference type="Orphanet" id="99879">
    <property type="disease" value="Familial isolated hyperparathyroidism"/>
</dbReference>
<dbReference type="Orphanet" id="2239">
    <property type="disease" value="Familial isolated hypoparathyroidism due to agenesis of parathyroid gland"/>
</dbReference>
<dbReference type="PharmGKB" id="PA28615"/>
<dbReference type="VEuPathDB" id="HostDB:ENSG00000124827"/>
<dbReference type="eggNOG" id="ENOG502QU2X">
    <property type="taxonomic scope" value="Eukaryota"/>
</dbReference>
<dbReference type="GeneTree" id="ENSGT00390000006777"/>
<dbReference type="HOGENOM" id="CLU_043105_0_0_1"/>
<dbReference type="InParanoid" id="O75603"/>
<dbReference type="OMA" id="QEPKHFD"/>
<dbReference type="OrthoDB" id="6241117at2759"/>
<dbReference type="PAN-GO" id="O75603">
    <property type="GO annotations" value="5 GO annotations based on evolutionary models"/>
</dbReference>
<dbReference type="PhylomeDB" id="O75603"/>
<dbReference type="TreeFam" id="TF324146"/>
<dbReference type="PathwayCommons" id="O75603"/>
<dbReference type="SignaLink" id="O75603"/>
<dbReference type="SIGNOR" id="O75603"/>
<dbReference type="BioGRID-ORCS" id="9247">
    <property type="hits" value="8 hits in 1164 CRISPR screens"/>
</dbReference>
<dbReference type="ChiTaRS" id="GCM2">
    <property type="organism name" value="human"/>
</dbReference>
<dbReference type="GeneWiki" id="GCM2"/>
<dbReference type="GenomeRNAi" id="9247"/>
<dbReference type="Pharos" id="O75603">
    <property type="development level" value="Tbio"/>
</dbReference>
<dbReference type="PRO" id="PR:O75603"/>
<dbReference type="Proteomes" id="UP000005640">
    <property type="component" value="Chromosome 6"/>
</dbReference>
<dbReference type="RNAct" id="O75603">
    <property type="molecule type" value="protein"/>
</dbReference>
<dbReference type="Bgee" id="ENSG00000124827">
    <property type="expression patterns" value="Expressed in male germ line stem cell (sensu Vertebrata) in testis and 7 other cell types or tissues"/>
</dbReference>
<dbReference type="GO" id="GO:0000785">
    <property type="term" value="C:chromatin"/>
    <property type="evidence" value="ECO:0000247"/>
    <property type="project" value="NTNU_SB"/>
</dbReference>
<dbReference type="GO" id="GO:0005634">
    <property type="term" value="C:nucleus"/>
    <property type="evidence" value="ECO:0000314"/>
    <property type="project" value="UniProtKB"/>
</dbReference>
<dbReference type="GO" id="GO:0003677">
    <property type="term" value="F:DNA binding"/>
    <property type="evidence" value="ECO:0000304"/>
    <property type="project" value="ProtInc"/>
</dbReference>
<dbReference type="GO" id="GO:0001228">
    <property type="term" value="F:DNA-binding transcription activator activity, RNA polymerase II-specific"/>
    <property type="evidence" value="ECO:0007669"/>
    <property type="project" value="InterPro"/>
</dbReference>
<dbReference type="GO" id="GO:0000981">
    <property type="term" value="F:DNA-binding transcription factor activity, RNA polymerase II-specific"/>
    <property type="evidence" value="ECO:0000315"/>
    <property type="project" value="UniProtKB"/>
</dbReference>
<dbReference type="GO" id="GO:0046872">
    <property type="term" value="F:metal ion binding"/>
    <property type="evidence" value="ECO:0007669"/>
    <property type="project" value="UniProtKB-KW"/>
</dbReference>
<dbReference type="GO" id="GO:0000978">
    <property type="term" value="F:RNA polymerase II cis-regulatory region sequence-specific DNA binding"/>
    <property type="evidence" value="ECO:0000318"/>
    <property type="project" value="GO_Central"/>
</dbReference>
<dbReference type="GO" id="GO:0043565">
    <property type="term" value="F:sequence-specific DNA binding"/>
    <property type="evidence" value="ECO:0000314"/>
    <property type="project" value="UniProtKB"/>
</dbReference>
<dbReference type="GO" id="GO:1990837">
    <property type="term" value="F:sequence-specific double-stranded DNA binding"/>
    <property type="evidence" value="ECO:0000314"/>
    <property type="project" value="ARUK-UCL"/>
</dbReference>
<dbReference type="GO" id="GO:0042063">
    <property type="term" value="P:gliogenesis"/>
    <property type="evidence" value="ECO:0000318"/>
    <property type="project" value="GO_Central"/>
</dbReference>
<dbReference type="GO" id="GO:0006874">
    <property type="term" value="P:intracellular calcium ion homeostasis"/>
    <property type="evidence" value="ECO:0000315"/>
    <property type="project" value="UniProtKB"/>
</dbReference>
<dbReference type="GO" id="GO:0030643">
    <property type="term" value="P:intracellular phosphate ion homeostasis"/>
    <property type="evidence" value="ECO:0000315"/>
    <property type="project" value="UniProtKB"/>
</dbReference>
<dbReference type="GO" id="GO:0060017">
    <property type="term" value="P:parathyroid gland development"/>
    <property type="evidence" value="ECO:0000315"/>
    <property type="project" value="UniProtKB"/>
</dbReference>
<dbReference type="GO" id="GO:0006357">
    <property type="term" value="P:regulation of transcription by RNA polymerase II"/>
    <property type="evidence" value="ECO:0000318"/>
    <property type="project" value="GO_Central"/>
</dbReference>
<dbReference type="GO" id="GO:0006366">
    <property type="term" value="P:transcription by RNA polymerase II"/>
    <property type="evidence" value="ECO:0000315"/>
    <property type="project" value="UniProtKB"/>
</dbReference>
<dbReference type="FunFam" id="3.30.70.3530:FF:000001">
    <property type="entry name" value="Chorion-specific transcription factor GCMb"/>
    <property type="match status" value="1"/>
</dbReference>
<dbReference type="Gene3D" id="2.20.25.670">
    <property type="entry name" value="GCM domain, large subdomain"/>
    <property type="match status" value="1"/>
</dbReference>
<dbReference type="Gene3D" id="3.30.70.3530">
    <property type="entry name" value="GCM motif"/>
    <property type="match status" value="1"/>
</dbReference>
<dbReference type="InterPro" id="IPR039791">
    <property type="entry name" value="GCM"/>
</dbReference>
<dbReference type="InterPro" id="IPR036115">
    <property type="entry name" value="GCM_dom_sf"/>
</dbReference>
<dbReference type="InterPro" id="IPR043020">
    <property type="entry name" value="GCM_large"/>
</dbReference>
<dbReference type="InterPro" id="IPR043021">
    <property type="entry name" value="GCM_small"/>
</dbReference>
<dbReference type="InterPro" id="IPR003902">
    <property type="entry name" value="Tscrpt_reg_GCM"/>
</dbReference>
<dbReference type="PANTHER" id="PTHR12414:SF7">
    <property type="entry name" value="CHORION-SPECIFIC TRANSCRIPTION FACTOR GCMB"/>
    <property type="match status" value="1"/>
</dbReference>
<dbReference type="PANTHER" id="PTHR12414">
    <property type="entry name" value="GLIAL CELLS MISSING RELATED/GLIDE"/>
    <property type="match status" value="1"/>
</dbReference>
<dbReference type="Pfam" id="PF03615">
    <property type="entry name" value="GCM"/>
    <property type="match status" value="1"/>
</dbReference>
<dbReference type="SUPFAM" id="SSF90073">
    <property type="entry name" value="GCM domain"/>
    <property type="match status" value="1"/>
</dbReference>
<dbReference type="PROSITE" id="PS50807">
    <property type="entry name" value="GCM"/>
    <property type="match status" value="1"/>
</dbReference>
<reference key="1">
    <citation type="journal article" date="1999" name="FEBS Lett.">
        <title>Isolation and expression analysis of a novel human homologue of the Drosophila glial cells missing (gcm) gene.</title>
        <authorList>
            <person name="Kanemura Y."/>
            <person name="Hiraga S."/>
            <person name="Arita N."/>
            <person name="Ohnishi T."/>
            <person name="Izumoto S."/>
            <person name="Mori K."/>
            <person name="Matsumura H."/>
            <person name="Yamasaki M."/>
            <person name="Fushiki S."/>
            <person name="Yoshimine T."/>
        </authorList>
    </citation>
    <scope>NUCLEOTIDE SEQUENCE [MRNA]</scope>
    <source>
        <tissue>Brain</tissue>
    </source>
</reference>
<reference key="2">
    <citation type="journal article" date="1999" name="Cytogenet. Cell Genet.">
        <title>GCMB, a second human homolog of the fly glide/gcm gene.</title>
        <authorList>
            <person name="Kammerer M."/>
            <person name="Pirola B."/>
            <person name="Giglio S."/>
            <person name="Giangrande A."/>
        </authorList>
    </citation>
    <scope>NUCLEOTIDE SEQUENCE [MRNA]</scope>
    <source>
        <tissue>Fetal brain</tissue>
    </source>
</reference>
<reference key="3">
    <citation type="submission" date="2009-01" db="EMBL/GenBank/DDBJ databases">
        <title>Presence of a functionally relevant novel R110W mutation in the DNA binding domain of GCMB gene in patients with sporadic idiopathic hypoparathyroidism: a genetic marker of the disease.</title>
        <authorList>
            <person name="Tomar N."/>
            <person name="Bora H."/>
            <person name="Gupta N."/>
            <person name="Sharma Y.D."/>
            <person name="Goswami R."/>
        </authorList>
    </citation>
    <scope>NUCLEOTIDE SEQUENCE [GENOMIC DNA]</scope>
    <scope>VARIANT FIH2 TRP-110</scope>
</reference>
<reference key="4">
    <citation type="journal article" date="2003" name="Nature">
        <title>The DNA sequence and analysis of human chromosome 6.</title>
        <authorList>
            <person name="Mungall A.J."/>
            <person name="Palmer S.A."/>
            <person name="Sims S.K."/>
            <person name="Edwards C.A."/>
            <person name="Ashurst J.L."/>
            <person name="Wilming L."/>
            <person name="Jones M.C."/>
            <person name="Horton R."/>
            <person name="Hunt S.E."/>
            <person name="Scott C.E."/>
            <person name="Gilbert J.G.R."/>
            <person name="Clamp M.E."/>
            <person name="Bethel G."/>
            <person name="Milne S."/>
            <person name="Ainscough R."/>
            <person name="Almeida J.P."/>
            <person name="Ambrose K.D."/>
            <person name="Andrews T.D."/>
            <person name="Ashwell R.I.S."/>
            <person name="Babbage A.K."/>
            <person name="Bagguley C.L."/>
            <person name="Bailey J."/>
            <person name="Banerjee R."/>
            <person name="Barker D.J."/>
            <person name="Barlow K.F."/>
            <person name="Bates K."/>
            <person name="Beare D.M."/>
            <person name="Beasley H."/>
            <person name="Beasley O."/>
            <person name="Bird C.P."/>
            <person name="Blakey S.E."/>
            <person name="Bray-Allen S."/>
            <person name="Brook J."/>
            <person name="Brown A.J."/>
            <person name="Brown J.Y."/>
            <person name="Burford D.C."/>
            <person name="Burrill W."/>
            <person name="Burton J."/>
            <person name="Carder C."/>
            <person name="Carter N.P."/>
            <person name="Chapman J.C."/>
            <person name="Clark S.Y."/>
            <person name="Clark G."/>
            <person name="Clee C.M."/>
            <person name="Clegg S."/>
            <person name="Cobley V."/>
            <person name="Collier R.E."/>
            <person name="Collins J.E."/>
            <person name="Colman L.K."/>
            <person name="Corby N.R."/>
            <person name="Coville G.J."/>
            <person name="Culley K.M."/>
            <person name="Dhami P."/>
            <person name="Davies J."/>
            <person name="Dunn M."/>
            <person name="Earthrowl M.E."/>
            <person name="Ellington A.E."/>
            <person name="Evans K.A."/>
            <person name="Faulkner L."/>
            <person name="Francis M.D."/>
            <person name="Frankish A."/>
            <person name="Frankland J."/>
            <person name="French L."/>
            <person name="Garner P."/>
            <person name="Garnett J."/>
            <person name="Ghori M.J."/>
            <person name="Gilby L.M."/>
            <person name="Gillson C.J."/>
            <person name="Glithero R.J."/>
            <person name="Grafham D.V."/>
            <person name="Grant M."/>
            <person name="Gribble S."/>
            <person name="Griffiths C."/>
            <person name="Griffiths M.N.D."/>
            <person name="Hall R."/>
            <person name="Halls K.S."/>
            <person name="Hammond S."/>
            <person name="Harley J.L."/>
            <person name="Hart E.A."/>
            <person name="Heath P.D."/>
            <person name="Heathcott R."/>
            <person name="Holmes S.J."/>
            <person name="Howden P.J."/>
            <person name="Howe K.L."/>
            <person name="Howell G.R."/>
            <person name="Huckle E."/>
            <person name="Humphray S.J."/>
            <person name="Humphries M.D."/>
            <person name="Hunt A.R."/>
            <person name="Johnson C.M."/>
            <person name="Joy A.A."/>
            <person name="Kay M."/>
            <person name="Keenan S.J."/>
            <person name="Kimberley A.M."/>
            <person name="King A."/>
            <person name="Laird G.K."/>
            <person name="Langford C."/>
            <person name="Lawlor S."/>
            <person name="Leongamornlert D.A."/>
            <person name="Leversha M."/>
            <person name="Lloyd C.R."/>
            <person name="Lloyd D.M."/>
            <person name="Loveland J.E."/>
            <person name="Lovell J."/>
            <person name="Martin S."/>
            <person name="Mashreghi-Mohammadi M."/>
            <person name="Maslen G.L."/>
            <person name="Matthews L."/>
            <person name="McCann O.T."/>
            <person name="McLaren S.J."/>
            <person name="McLay K."/>
            <person name="McMurray A."/>
            <person name="Moore M.J.F."/>
            <person name="Mullikin J.C."/>
            <person name="Niblett D."/>
            <person name="Nickerson T."/>
            <person name="Novik K.L."/>
            <person name="Oliver K."/>
            <person name="Overton-Larty E.K."/>
            <person name="Parker A."/>
            <person name="Patel R."/>
            <person name="Pearce A.V."/>
            <person name="Peck A.I."/>
            <person name="Phillimore B.J.C.T."/>
            <person name="Phillips S."/>
            <person name="Plumb R.W."/>
            <person name="Porter K.M."/>
            <person name="Ramsey Y."/>
            <person name="Ranby S.A."/>
            <person name="Rice C.M."/>
            <person name="Ross M.T."/>
            <person name="Searle S.M."/>
            <person name="Sehra H.K."/>
            <person name="Sheridan E."/>
            <person name="Skuce C.D."/>
            <person name="Smith S."/>
            <person name="Smith M."/>
            <person name="Spraggon L."/>
            <person name="Squares S.L."/>
            <person name="Steward C.A."/>
            <person name="Sycamore N."/>
            <person name="Tamlyn-Hall G."/>
            <person name="Tester J."/>
            <person name="Theaker A.J."/>
            <person name="Thomas D.W."/>
            <person name="Thorpe A."/>
            <person name="Tracey A."/>
            <person name="Tromans A."/>
            <person name="Tubby B."/>
            <person name="Wall M."/>
            <person name="Wallis J.M."/>
            <person name="West A.P."/>
            <person name="White S.S."/>
            <person name="Whitehead S.L."/>
            <person name="Whittaker H."/>
            <person name="Wild A."/>
            <person name="Willey D.J."/>
            <person name="Wilmer T.E."/>
            <person name="Wood J.M."/>
            <person name="Wray P.W."/>
            <person name="Wyatt J.C."/>
            <person name="Young L."/>
            <person name="Younger R.M."/>
            <person name="Bentley D.R."/>
            <person name="Coulson A."/>
            <person name="Durbin R.M."/>
            <person name="Hubbard T."/>
            <person name="Sulston J.E."/>
            <person name="Dunham I."/>
            <person name="Rogers J."/>
            <person name="Beck S."/>
        </authorList>
    </citation>
    <scope>NUCLEOTIDE SEQUENCE [LARGE SCALE GENOMIC DNA]</scope>
</reference>
<reference key="5">
    <citation type="submission" date="2005-07" db="EMBL/GenBank/DDBJ databases">
        <authorList>
            <person name="Mural R.J."/>
            <person name="Istrail S."/>
            <person name="Sutton G."/>
            <person name="Florea L."/>
            <person name="Halpern A.L."/>
            <person name="Mobarry C.M."/>
            <person name="Lippert R."/>
            <person name="Walenz B."/>
            <person name="Shatkay H."/>
            <person name="Dew I."/>
            <person name="Miller J.R."/>
            <person name="Flanigan M.J."/>
            <person name="Edwards N.J."/>
            <person name="Bolanos R."/>
            <person name="Fasulo D."/>
            <person name="Halldorsson B.V."/>
            <person name="Hannenhalli S."/>
            <person name="Turner R."/>
            <person name="Yooseph S."/>
            <person name="Lu F."/>
            <person name="Nusskern D.R."/>
            <person name="Shue B.C."/>
            <person name="Zheng X.H."/>
            <person name="Zhong F."/>
            <person name="Delcher A.L."/>
            <person name="Huson D.H."/>
            <person name="Kravitz S.A."/>
            <person name="Mouchard L."/>
            <person name="Reinert K."/>
            <person name="Remington K.A."/>
            <person name="Clark A.G."/>
            <person name="Waterman M.S."/>
            <person name="Eichler E.E."/>
            <person name="Adams M.D."/>
            <person name="Hunkapiller M.W."/>
            <person name="Myers E.W."/>
            <person name="Venter J.C."/>
        </authorList>
    </citation>
    <scope>NUCLEOTIDE SEQUENCE [LARGE SCALE GENOMIC DNA]</scope>
</reference>
<reference key="6">
    <citation type="journal article" date="2004" name="Genome Res.">
        <title>The status, quality, and expansion of the NIH full-length cDNA project: the Mammalian Gene Collection (MGC).</title>
        <authorList>
            <consortium name="The MGC Project Team"/>
        </authorList>
    </citation>
    <scope>NUCLEOTIDE SEQUENCE [LARGE SCALE MRNA]</scope>
</reference>
<reference key="7">
    <citation type="journal article" date="2005" name="J. Clin. Endocrinol. Metab.">
        <title>GCMB mutation in familial isolated hypoparathyroidism with residual secretion of parathyroid hormone.</title>
        <authorList>
            <person name="Thomee C."/>
            <person name="Schubert S.W."/>
            <person name="Parma J."/>
            <person name="Le P.Q."/>
            <person name="Hashemolhosseini S."/>
            <person name="Wegner M."/>
            <person name="Abramowicz M.J."/>
        </authorList>
    </citation>
    <scope>VARIANT FIH2 SER-63</scope>
</reference>
<reference key="8">
    <citation type="journal article" date="2005" name="J. Med. Genet.">
        <title>Identification of a novel mutation disrupting the DNA binding activity of GCM2 in autosomal recessive familial isolated hypoparathyroidism.</title>
        <authorList>
            <person name="Baumber L."/>
            <person name="Tufarelli C."/>
            <person name="Patel S."/>
            <person name="King P."/>
            <person name="Johnson C.A."/>
            <person name="Maher E.R."/>
            <person name="Trembath R.C."/>
        </authorList>
    </citation>
    <scope>VARIANT FIH2 LEU-47</scope>
    <scope>CHARACTERIZATION OF VARIANT FIH2 LEU-47</scope>
</reference>
<reference key="9">
    <citation type="journal article" date="2010" name="Hum. Mol. Genet.">
        <title>Identification and characterization of novel parathyroid-specific transcription factor Glial Cells Missing Homolog B (GCMB) mutations in eight families with autosomal recessive hypoparathyroidism.</title>
        <authorList>
            <person name="Bowl M.R."/>
            <person name="Mirczuk S.M."/>
            <person name="Grigorieva I.V."/>
            <person name="Piret S.E."/>
            <person name="Cranston T."/>
            <person name="Southam L."/>
            <person name="Allgrove J."/>
            <person name="Bahl S."/>
            <person name="Brain C."/>
            <person name="Loughlin J."/>
            <person name="Mughal Z."/>
            <person name="Ryan F."/>
            <person name="Shaw N."/>
            <person name="Thakker Y.V."/>
            <person name="Tiosano D."/>
            <person name="Nesbit M.A."/>
            <person name="Thakker R.V."/>
        </authorList>
    </citation>
    <scope>VARIANTS FIH2 LEU-47 AND TRP-110</scope>
    <scope>VARIANT ASP-282</scope>
    <scope>CHARACTERIZATION OF VARIANTS FIH2 LEU-47 AND TRP-110</scope>
    <scope>SUBCELLULAR LOCATION</scope>
    <scope>FUNCTION</scope>
</reference>
<reference key="10">
    <citation type="journal article" date="2010" name="J. Clin. Endocrinol. Metab.">
        <title>A missense glial cells missing homolog B (GCMB) mutation, Asn502His, causes autosomal dominant hypoparathyroidism.</title>
        <authorList>
            <person name="Mirczuk S.M."/>
            <person name="Bowl M.R."/>
            <person name="Nesbit M.A."/>
            <person name="Cranston T."/>
            <person name="Fratter C."/>
            <person name="Allgrove J."/>
            <person name="Brain C."/>
            <person name="Thakker R.V."/>
        </authorList>
    </citation>
    <scope>VARIANT FIH2 HIS-502</scope>
    <scope>CHARACTERIZATION OF VARIANT FIH2 HIS-502</scope>
</reference>
<reference key="11">
    <citation type="journal article" date="2011" name="J. Endocrinol.">
        <title>Mutational analysis of GCMB, a parathyroid-specific transcription factor, in parathyroid adenoma of primary hyperparathyroidism.</title>
        <authorList>
            <person name="Mannstadt M."/>
            <person name="Holick E."/>
            <person name="Zhao W."/>
            <person name="Juppner H."/>
        </authorList>
    </citation>
    <scope>VARIANTS ASP-282 AND MET-382</scope>
    <scope>CHARACTERIZATION OF VARIANT MET-382</scope>
</reference>
<reference key="12">
    <citation type="journal article" date="2012" name="J. Pediatr. Endocrinol. Metab.">
        <title>A novel mutation in the GCM2 gene causing severe congenital isolated hypoparathyroidism.</title>
        <authorList>
            <person name="Doyle D."/>
            <person name="Kirwin S.M."/>
            <person name="Sol-Church K."/>
            <person name="Levine M.A."/>
        </authorList>
    </citation>
    <scope>VARIANT FIH2 136-TYR--PHE-506 DEL</scope>
    <scope>CHARACTERIZATION OF VARIANT FIH2 136-TYR--PHE-506 DEL</scope>
</reference>
<reference key="13">
    <citation type="journal article" date="2016" name="Am. J. Hum. Genet.">
        <title>GCM2-activating mutations in familial isolated hyperparathyroidism.</title>
        <authorList>
            <person name="Guan B."/>
            <person name="Welch J.M."/>
            <person name="Sapp J.C."/>
            <person name="Ling H."/>
            <person name="Li Y."/>
            <person name="Johnston J.J."/>
            <person name="Kebebew E."/>
            <person name="Biesecker L.G."/>
            <person name="Simonds W.F."/>
            <person name="Marx S.J."/>
            <person name="Agarwal S.K."/>
        </authorList>
    </citation>
    <scope>INVOLVEMENT IN HRPT4</scope>
    <scope>VARIANTS HRPT4 GLU-251; GLN-379; MET-382 AND SER-394</scope>
    <scope>VARIANTS SER-203; VAL-227; ASP-282 AND ASP-315</scope>
    <scope>CHARACTERIZATION OF VARIANTS HRPT4 GLU-251; GLN-379; MET-382 AND SER-394</scope>
    <scope>CHARACTERIZATION OF VARIANTS SER-203; VAL-227; ASP-282 AND ASP-315</scope>
    <scope>FUNCTION</scope>
    <scope>REGION</scope>
</reference>
<name>GCM2_HUMAN</name>
<proteinExistence type="evidence at protein level"/>
<comment type="function">
    <text evidence="5 9 10">Transcription factor that binds specific sequences on gene promoters and activate their transcription. Through the regulation of gene transcription, may play a role in parathyroid gland development.</text>
</comment>
<comment type="interaction">
    <interactant intactId="EBI-10188645">
        <id>O75603</id>
    </interactant>
    <interactant intactId="EBI-4314501">
        <id>P40199</id>
        <label>CEACAM6</label>
    </interactant>
    <organismsDiffer>false</organismsDiffer>
    <experiments>3</experiments>
</comment>
<comment type="interaction">
    <interactant intactId="EBI-10188645">
        <id>O75603</id>
    </interactant>
    <interactant intactId="EBI-748171">
        <id>O43186</id>
        <label>CRX</label>
    </interactant>
    <organismsDiffer>false</organismsDiffer>
    <experiments>11</experiments>
</comment>
<comment type="interaction">
    <interactant intactId="EBI-10188645">
        <id>O75603</id>
    </interactant>
    <interactant intactId="EBI-10694655">
        <id>Q7L591-3</id>
        <label>DOK3</label>
    </interactant>
    <organismsDiffer>false</organismsDiffer>
    <experiments>3</experiments>
</comment>
<comment type="interaction">
    <interactant intactId="EBI-10188645">
        <id>O75603</id>
    </interactant>
    <interactant intactId="EBI-947964">
        <id>Q16610</id>
        <label>ECM1</label>
    </interactant>
    <organismsDiffer>false</organismsDiffer>
    <experiments>3</experiments>
</comment>
<comment type="interaction">
    <interactant intactId="EBI-10188645">
        <id>O75603</id>
    </interactant>
    <interactant intactId="EBI-741101">
        <id>Q13643</id>
        <label>FHL3</label>
    </interactant>
    <organismsDiffer>false</organismsDiffer>
    <experiments>11</experiments>
</comment>
<comment type="interaction">
    <interactant intactId="EBI-10188645">
        <id>O75603</id>
    </interactant>
    <interactant intactId="EBI-10261098">
        <id>Q86YR5-3</id>
        <label>GPSM1</label>
    </interactant>
    <organismsDiffer>false</organismsDiffer>
    <experiments>3</experiments>
</comment>
<comment type="interaction">
    <interactant intactId="EBI-10188645">
        <id>O75603</id>
    </interactant>
    <interactant intactId="EBI-19954058">
        <id>O15499</id>
        <label>GSC2</label>
    </interactant>
    <organismsDiffer>false</organismsDiffer>
    <experiments>3</experiments>
</comment>
<comment type="interaction">
    <interactant intactId="EBI-10188645">
        <id>O75603</id>
    </interactant>
    <interactant intactId="EBI-740785">
        <id>P49639</id>
        <label>HOXA1</label>
    </interactant>
    <organismsDiffer>false</organismsDiffer>
    <experiments>3</experiments>
</comment>
<comment type="interaction">
    <interactant intactId="EBI-10188645">
        <id>O75603</id>
    </interactant>
    <interactant intactId="EBI-7116203">
        <id>O75031</id>
        <label>HSF2BP</label>
    </interactant>
    <organismsDiffer>false</organismsDiffer>
    <experiments>3</experiments>
</comment>
<comment type="interaction">
    <interactant intactId="EBI-10188645">
        <id>O75603</id>
    </interactant>
    <interactant intactId="EBI-3957665">
        <id>Q96LI6</id>
        <label>HSFY2</label>
    </interactant>
    <organismsDiffer>false</organismsDiffer>
    <experiments>12</experiments>
</comment>
<comment type="interaction">
    <interactant intactId="EBI-10188645">
        <id>O75603</id>
    </interactant>
    <interactant intactId="EBI-9090173">
        <id>P0C870</id>
        <label>JMJD7</label>
    </interactant>
    <organismsDiffer>false</organismsDiffer>
    <experiments>3</experiments>
</comment>
<comment type="interaction">
    <interactant intactId="EBI-10188645">
        <id>O75603</id>
    </interactant>
    <interactant intactId="EBI-11962084">
        <id>Q3LI66</id>
        <label>KRTAP6-2</label>
    </interactant>
    <organismsDiffer>false</organismsDiffer>
    <experiments>3</experiments>
</comment>
<comment type="interaction">
    <interactant intactId="EBI-10188645">
        <id>O75603</id>
    </interactant>
    <interactant intactId="EBI-18394498">
        <id>Q8IUC3</id>
        <label>KRTAP7-1</label>
    </interactant>
    <organismsDiffer>false</organismsDiffer>
    <experiments>3</experiments>
</comment>
<comment type="interaction">
    <interactant intactId="EBI-10188645">
        <id>O75603</id>
    </interactant>
    <interactant intactId="EBI-10261141">
        <id>Q8IUC2</id>
        <label>KRTAP8-1</label>
    </interactant>
    <organismsDiffer>false</organismsDiffer>
    <experiments>3</experiments>
</comment>
<comment type="interaction">
    <interactant intactId="EBI-10188645">
        <id>O75603</id>
    </interactant>
    <interactant intactId="EBI-9088686">
        <id>Q14847-2</id>
        <label>LASP1</label>
    </interactant>
    <organismsDiffer>false</organismsDiffer>
    <experiments>3</experiments>
</comment>
<comment type="interaction">
    <interactant intactId="EBI-10188645">
        <id>O75603</id>
    </interactant>
    <interactant intactId="EBI-12039345">
        <id>Q9UBR4-2</id>
        <label>LHX3</label>
    </interactant>
    <organismsDiffer>false</organismsDiffer>
    <experiments>3</experiments>
</comment>
<comment type="interaction">
    <interactant intactId="EBI-10188645">
        <id>O75603</id>
    </interactant>
    <interactant intactId="EBI-16439278">
        <id>Q6FHY5</id>
        <label>MEOX2</label>
    </interactant>
    <organismsDiffer>false</organismsDiffer>
    <experiments>3</experiments>
</comment>
<comment type="interaction">
    <interactant intactId="EBI-10188645">
        <id>O75603</id>
    </interactant>
    <interactant intactId="EBI-5662487">
        <id>Q8TDC0</id>
        <label>MYOZ3</label>
    </interactant>
    <organismsDiffer>false</organismsDiffer>
    <experiments>3</experiments>
</comment>
<comment type="interaction">
    <interactant intactId="EBI-10188645">
        <id>O75603</id>
    </interactant>
    <interactant intactId="EBI-747278">
        <id>P26367</id>
        <label>PAX6</label>
    </interactant>
    <organismsDiffer>false</organismsDiffer>
    <experiments>3</experiments>
</comment>
<comment type="interaction">
    <interactant intactId="EBI-10188645">
        <id>O75603</id>
    </interactant>
    <interactant intactId="EBI-2683132">
        <id>Q06710</id>
        <label>PAX8</label>
    </interactant>
    <organismsDiffer>false</organismsDiffer>
    <experiments>3</experiments>
</comment>
<comment type="interaction">
    <interactant intactId="EBI-10188645">
        <id>O75603</id>
    </interactant>
    <interactant intactId="EBI-949255">
        <id>Q58EX7</id>
        <label>PLEKHG4</label>
    </interactant>
    <organismsDiffer>false</organismsDiffer>
    <experiments>3</experiments>
</comment>
<comment type="interaction">
    <interactant intactId="EBI-10188645">
        <id>O75603</id>
    </interactant>
    <interactant intactId="EBI-12029004">
        <id>P78424</id>
        <label>POU6F2</label>
    </interactant>
    <organismsDiffer>false</organismsDiffer>
    <experiments>3</experiments>
</comment>
<comment type="interaction">
    <interactant intactId="EBI-10188645">
        <id>O75603</id>
    </interactant>
    <interactant intactId="EBI-740322">
        <id>Q93062</id>
        <label>RBPMS</label>
    </interactant>
    <organismsDiffer>false</organismsDiffer>
    <experiments>5</experiments>
</comment>
<comment type="interaction">
    <interactant intactId="EBI-10188645">
        <id>O75603</id>
    </interactant>
    <interactant intactId="EBI-740343">
        <id>Q93062-3</id>
        <label>RBPMS</label>
    </interactant>
    <organismsDiffer>false</organismsDiffer>
    <experiments>3</experiments>
</comment>
<comment type="interaction">
    <interactant intactId="EBI-10188645">
        <id>O75603</id>
    </interactant>
    <interactant intactId="EBI-6257312">
        <id>Q9BVN2</id>
        <label>RUSC1</label>
    </interactant>
    <organismsDiffer>false</organismsDiffer>
    <experiments>3</experiments>
</comment>
<comment type="interaction">
    <interactant intactId="EBI-10188645">
        <id>O75603</id>
    </interactant>
    <interactant intactId="EBI-353460">
        <id>Q04837</id>
        <label>SSBP1</label>
    </interactant>
    <organismsDiffer>false</organismsDiffer>
    <experiments>3</experiments>
</comment>
<comment type="interaction">
    <interactant intactId="EBI-10188645">
        <id>O75603</id>
    </interactant>
    <interactant intactId="EBI-12096770">
        <id>O60806</id>
        <label>TBX19</label>
    </interactant>
    <organismsDiffer>false</organismsDiffer>
    <experiments>3</experiments>
</comment>
<comment type="interaction">
    <interactant intactId="EBI-10188645">
        <id>O75603</id>
    </interactant>
    <interactant intactId="EBI-359224">
        <id>Q13077</id>
        <label>TRAF1</label>
    </interactant>
    <organismsDiffer>false</organismsDiffer>
    <experiments>3</experiments>
</comment>
<comment type="interaction">
    <interactant intactId="EBI-10188645">
        <id>O75603</id>
    </interactant>
    <interactant intactId="EBI-11975223">
        <id>Q70EL1-9</id>
        <label>USP54</label>
    </interactant>
    <organismsDiffer>false</organismsDiffer>
    <experiments>3</experiments>
</comment>
<comment type="interaction">
    <interactant intactId="EBI-10188645">
        <id>O75603</id>
    </interactant>
    <interactant intactId="EBI-12040603">
        <id>Q9NZC7-5</id>
        <label>WWOX</label>
    </interactant>
    <organismsDiffer>false</organismsDiffer>
    <experiments>3</experiments>
</comment>
<comment type="interaction">
    <interactant intactId="EBI-10188645">
        <id>O75603</id>
    </interactant>
    <interactant intactId="EBI-12011330">
        <id>Q8NF64-3</id>
        <label>ZMIZ2</label>
    </interactant>
    <organismsDiffer>false</organismsDiffer>
    <experiments>3</experiments>
</comment>
<comment type="subcellular location">
    <subcellularLocation>
        <location evidence="5">Nucleus</location>
    </subcellularLocation>
</comment>
<comment type="domain">
    <text evidence="9">The C-terminal conserved inhibitory domain (CCID) negatively regulates the transcriptional activity of the protein.</text>
</comment>
<comment type="disease" evidence="3 4 5 6 8 11">
    <disease id="DI-05841">
        <name>Hypoparathyroidism, familial isolated, 2</name>
        <acronym>FIH2</acronym>
        <description>An autosomal recessive form of hypoparathyroidism, a disorder characterized by hypocalcemia and hyperphosphatemia due to a deficiency of parathyroid hormone. Clinical features include seizures, tetany and cramps.</description>
        <dbReference type="MIM" id="618883"/>
    </disease>
    <text>The disease is caused by variants affecting the gene represented in this entry.</text>
</comment>
<comment type="disease" evidence="9">
    <disease id="DI-04951">
        <name>Hyperparathyroidism 4</name>
        <acronym>HRPT4</acronym>
        <description>A form of familial primary hyperparathyroidism, a hypercalcemic disorder caused by inappropriate oversecretion of parathyroid hormone due to parathyroid hyperplasia or neoplasms. Clinical features include hypercalcemia, phosphaturia, and increased bone resorption. HRPT4 inheritance is autosomal dominant.</description>
        <dbReference type="MIM" id="617343"/>
    </disease>
    <text>The disease is caused by variants affecting the gene represented in this entry.</text>
</comment>
<evidence type="ECO:0000255" key="1">
    <source>
        <dbReference type="PROSITE-ProRule" id="PRU00245"/>
    </source>
</evidence>
<evidence type="ECO:0000256" key="2">
    <source>
        <dbReference type="SAM" id="MobiDB-lite"/>
    </source>
</evidence>
<evidence type="ECO:0000269" key="3">
    <source>
    </source>
</evidence>
<evidence type="ECO:0000269" key="4">
    <source>
    </source>
</evidence>
<evidence type="ECO:0000269" key="5">
    <source>
    </source>
</evidence>
<evidence type="ECO:0000269" key="6">
    <source>
    </source>
</evidence>
<evidence type="ECO:0000269" key="7">
    <source>
    </source>
</evidence>
<evidence type="ECO:0000269" key="8">
    <source>
    </source>
</evidence>
<evidence type="ECO:0000269" key="9">
    <source>
    </source>
</evidence>
<evidence type="ECO:0000269" key="10">
    <source>
    </source>
</evidence>
<evidence type="ECO:0000269" key="11">
    <source ref="3"/>
</evidence>
<evidence type="ECO:0000303" key="12">
    <source>
    </source>
</evidence>
<evidence type="ECO:0000303" key="13">
    <source>
    </source>
</evidence>
<evidence type="ECO:0000303" key="14">
    <source>
    </source>
</evidence>
<evidence type="ECO:0000303" key="15">
    <source ref="3"/>
</evidence>
<evidence type="ECO:0000312" key="16">
    <source>
        <dbReference type="HGNC" id="HGNC:4198"/>
    </source>
</evidence>
<sequence length="506" mass="56610">MPAAAVQEAVGVCSYGMQLSWDINDPQMPQELALFDQFREWPDGYVRFIYSSDEKKAQRHLSGWAMRNTNNHNGHILKKSCLGVVVCTQACTLPDGSRLQLRPAICDKARLKQQKKACPNCHSALELIPCRGHSGYPVTNFWRLDGNAIFFQAKGVHDHPRPESKSETEARRSAIKRQMASFYQPQKKRIRESEAEENQDSSGHFSNIPPLENPEDFDIVTETSFPIPGQPCPSFPKSDVYKATCDLATFQGDKMPPFQKYSSPRIYLPRPPCSYELANPGYTNSSPYPTLYKDSTSIPNDTDWVHLNTLQCNVNSYSSYERSFDFTNKQHGWKPALGKPSLVERTNHGQFQAMATRPYYNPELPCRYLTTPPPGAPALQTVITTTTKVSYQAYQPPAMKYSDSVREVKSLSSCNYAPEDTGMSVYPEPWGPPVTVTRAASPSGPPPMKIAGDCRAIRPTVAIPHEPVSSRTDEAETWDVCLSGLGSAVSYSDRVGPFFTYNNEDF</sequence>
<organism>
    <name type="scientific">Homo sapiens</name>
    <name type="common">Human</name>
    <dbReference type="NCBI Taxonomy" id="9606"/>
    <lineage>
        <taxon>Eukaryota</taxon>
        <taxon>Metazoa</taxon>
        <taxon>Chordata</taxon>
        <taxon>Craniata</taxon>
        <taxon>Vertebrata</taxon>
        <taxon>Euteleostomi</taxon>
        <taxon>Mammalia</taxon>
        <taxon>Eutheria</taxon>
        <taxon>Euarchontoglires</taxon>
        <taxon>Primates</taxon>
        <taxon>Haplorrhini</taxon>
        <taxon>Catarrhini</taxon>
        <taxon>Hominidae</taxon>
        <taxon>Homo</taxon>
    </lineage>
</organism>
<keyword id="KW-0217">Developmental protein</keyword>
<keyword id="KW-0225">Disease variant</keyword>
<keyword id="KW-0238">DNA-binding</keyword>
<keyword id="KW-0479">Metal-binding</keyword>
<keyword id="KW-0539">Nucleus</keyword>
<keyword id="KW-1185">Reference proteome</keyword>
<keyword id="KW-0804">Transcription</keyword>
<keyword id="KW-0805">Transcription regulation</keyword>
<keyword id="KW-0862">Zinc</keyword>